<feature type="chain" id="PRO_0000402699" description="Ureidoacrylate amidohydrolase RutB">
    <location>
        <begin position="1"/>
        <end position="245"/>
    </location>
</feature>
<feature type="active site" description="Proton acceptor" evidence="1">
    <location>
        <position position="41"/>
    </location>
</feature>
<feature type="active site" evidence="1">
    <location>
        <position position="150"/>
    </location>
</feature>
<feature type="active site" description="Nucleophile" evidence="1">
    <location>
        <position position="183"/>
    </location>
</feature>
<keyword id="KW-0378">Hydrolase</keyword>
<sequence>MNASATVAGVDLPDGQPARVLHARPEPLRMKPGETALVVVDMQNAYASLGGYLDLAGFDVSSTGPVIVNINKACAAARAAGIPVIFFQNGWDPAYVEAGGPGSPNWHKSNALKTMRKRPELEGQLLAKGGWDYQLVDELKPQPGDIVVPKIRYSGFFNSSFDSVLRSRGIRNLVFTGIATNVCVESTLRDGFHLEYFGVVLADATHQAGPDFAQQAALFNIETFFGWISSVDDFCTTFSPVGQPS</sequence>
<gene>
    <name evidence="1" type="primary">rutB</name>
    <name type="ordered locus">PSPPH_1047</name>
</gene>
<reference key="1">
    <citation type="journal article" date="2005" name="J. Bacteriol.">
        <title>Whole-genome sequence analysis of Pseudomonas syringae pv. phaseolicola 1448A reveals divergence among pathovars in genes involved in virulence and transposition.</title>
        <authorList>
            <person name="Joardar V."/>
            <person name="Lindeberg M."/>
            <person name="Jackson R.W."/>
            <person name="Selengut J."/>
            <person name="Dodson R."/>
            <person name="Brinkac L.M."/>
            <person name="Daugherty S.C."/>
            <person name="DeBoy R.T."/>
            <person name="Durkin A.S."/>
            <person name="Gwinn Giglio M."/>
            <person name="Madupu R."/>
            <person name="Nelson W.C."/>
            <person name="Rosovitz M.J."/>
            <person name="Sullivan S.A."/>
            <person name="Crabtree J."/>
            <person name="Creasy T."/>
            <person name="Davidsen T.M."/>
            <person name="Haft D.H."/>
            <person name="Zafar N."/>
            <person name="Zhou L."/>
            <person name="Halpin R."/>
            <person name="Holley T."/>
            <person name="Khouri H.M."/>
            <person name="Feldblyum T.V."/>
            <person name="White O."/>
            <person name="Fraser C.M."/>
            <person name="Chatterjee A.K."/>
            <person name="Cartinhour S."/>
            <person name="Schneider D."/>
            <person name="Mansfield J.W."/>
            <person name="Collmer A."/>
            <person name="Buell R."/>
        </authorList>
    </citation>
    <scope>NUCLEOTIDE SEQUENCE [LARGE SCALE GENOMIC DNA]</scope>
    <source>
        <strain>1448A / Race 6</strain>
    </source>
</reference>
<evidence type="ECO:0000255" key="1">
    <source>
        <dbReference type="HAMAP-Rule" id="MF_00830"/>
    </source>
</evidence>
<proteinExistence type="inferred from homology"/>
<accession>Q48MQ5</accession>
<protein>
    <recommendedName>
        <fullName evidence="1">Ureidoacrylate amidohydrolase RutB</fullName>
        <ecNumber evidence="1">3.5.1.110</ecNumber>
    </recommendedName>
</protein>
<name>RUTB_PSE14</name>
<comment type="function">
    <text evidence="1">Hydrolyzes ureidoacrylate to form aminoacrylate and carbamate. The carbamate hydrolyzes spontaneously, thereby releasing one of the nitrogen atoms of the pyrimidine ring as ammonia and one of its carbon atoms as CO2.</text>
</comment>
<comment type="catalytic activity">
    <reaction evidence="1">
        <text>(Z)-3-ureidoacrylate + H2O + H(+) = (Z)-3-aminoacrylate + NH4(+) + CO2</text>
        <dbReference type="Rhea" id="RHEA:42624"/>
        <dbReference type="ChEBI" id="CHEBI:15377"/>
        <dbReference type="ChEBI" id="CHEBI:15378"/>
        <dbReference type="ChEBI" id="CHEBI:16526"/>
        <dbReference type="ChEBI" id="CHEBI:28938"/>
        <dbReference type="ChEBI" id="CHEBI:59891"/>
        <dbReference type="ChEBI" id="CHEBI:59894"/>
        <dbReference type="EC" id="3.5.1.110"/>
    </reaction>
</comment>
<comment type="catalytic activity">
    <reaction evidence="1">
        <text>(Z)-3-ureidoacrylate + H2O = (Z)-3-aminoacrylate + carbamate + H(+)</text>
        <dbReference type="Rhea" id="RHEA:31603"/>
        <dbReference type="ChEBI" id="CHEBI:13941"/>
        <dbReference type="ChEBI" id="CHEBI:15377"/>
        <dbReference type="ChEBI" id="CHEBI:15378"/>
        <dbReference type="ChEBI" id="CHEBI:59891"/>
        <dbReference type="ChEBI" id="CHEBI:59894"/>
    </reaction>
</comment>
<comment type="catalytic activity">
    <reaction evidence="1">
        <text>(Z)-2-methylureidoacrylate + H2O + H(+) = (Z)-2-methylaminoacrylate + NH4(+) + CO2</text>
        <dbReference type="Rhea" id="RHEA:42620"/>
        <dbReference type="ChEBI" id="CHEBI:15377"/>
        <dbReference type="ChEBI" id="CHEBI:15378"/>
        <dbReference type="ChEBI" id="CHEBI:16526"/>
        <dbReference type="ChEBI" id="CHEBI:28938"/>
        <dbReference type="ChEBI" id="CHEBI:143783"/>
        <dbReference type="ChEBI" id="CHEBI:145735"/>
        <dbReference type="EC" id="3.5.1.110"/>
    </reaction>
</comment>
<comment type="similarity">
    <text evidence="1">Belongs to the isochorismatase family. RutB subfamily.</text>
</comment>
<dbReference type="EC" id="3.5.1.110" evidence="1"/>
<dbReference type="EMBL" id="CP000058">
    <property type="protein sequence ID" value="AAZ35328.1"/>
    <property type="molecule type" value="Genomic_DNA"/>
</dbReference>
<dbReference type="RefSeq" id="WP_011167873.1">
    <property type="nucleotide sequence ID" value="NC_005773.3"/>
</dbReference>
<dbReference type="SMR" id="Q48MQ5"/>
<dbReference type="KEGG" id="psp:PSPPH_1047"/>
<dbReference type="eggNOG" id="COG1335">
    <property type="taxonomic scope" value="Bacteria"/>
</dbReference>
<dbReference type="HOGENOM" id="CLU_068979_8_0_6"/>
<dbReference type="Proteomes" id="UP000000551">
    <property type="component" value="Chromosome"/>
</dbReference>
<dbReference type="GO" id="GO:0016811">
    <property type="term" value="F:hydrolase activity, acting on carbon-nitrogen (but not peptide) bonds, in linear amides"/>
    <property type="evidence" value="ECO:0007669"/>
    <property type="project" value="UniProtKB-UniRule"/>
</dbReference>
<dbReference type="GO" id="GO:0019740">
    <property type="term" value="P:nitrogen utilization"/>
    <property type="evidence" value="ECO:0007669"/>
    <property type="project" value="UniProtKB-UniRule"/>
</dbReference>
<dbReference type="GO" id="GO:0006212">
    <property type="term" value="P:uracil catabolic process"/>
    <property type="evidence" value="ECO:0007669"/>
    <property type="project" value="UniProtKB-UniRule"/>
</dbReference>
<dbReference type="CDD" id="cd00431">
    <property type="entry name" value="cysteine_hydrolases"/>
    <property type="match status" value="1"/>
</dbReference>
<dbReference type="Gene3D" id="3.40.50.850">
    <property type="entry name" value="Isochorismatase-like"/>
    <property type="match status" value="1"/>
</dbReference>
<dbReference type="HAMAP" id="MF_00830">
    <property type="entry name" value="RutB"/>
    <property type="match status" value="1"/>
</dbReference>
<dbReference type="InterPro" id="IPR000868">
    <property type="entry name" value="Isochorismatase-like_dom"/>
</dbReference>
<dbReference type="InterPro" id="IPR050272">
    <property type="entry name" value="Isochorismatase-like_hydrls"/>
</dbReference>
<dbReference type="InterPro" id="IPR036380">
    <property type="entry name" value="Isochorismatase-like_sf"/>
</dbReference>
<dbReference type="InterPro" id="IPR019916">
    <property type="entry name" value="RutB"/>
</dbReference>
<dbReference type="NCBIfam" id="TIGR03614">
    <property type="entry name" value="RutB"/>
    <property type="match status" value="1"/>
</dbReference>
<dbReference type="PANTHER" id="PTHR43540:SF6">
    <property type="entry name" value="ISOCHORISMATASE-LIKE DOMAIN-CONTAINING PROTEIN"/>
    <property type="match status" value="1"/>
</dbReference>
<dbReference type="PANTHER" id="PTHR43540">
    <property type="entry name" value="PEROXYUREIDOACRYLATE/UREIDOACRYLATE AMIDOHYDROLASE-RELATED"/>
    <property type="match status" value="1"/>
</dbReference>
<dbReference type="Pfam" id="PF00857">
    <property type="entry name" value="Isochorismatase"/>
    <property type="match status" value="1"/>
</dbReference>
<dbReference type="SUPFAM" id="SSF52499">
    <property type="entry name" value="Isochorismatase-like hydrolases"/>
    <property type="match status" value="1"/>
</dbReference>
<organism>
    <name type="scientific">Pseudomonas savastanoi pv. phaseolicola (strain 1448A / Race 6)</name>
    <name type="common">Pseudomonas syringae pv. phaseolicola (strain 1448A / Race 6)</name>
    <dbReference type="NCBI Taxonomy" id="264730"/>
    <lineage>
        <taxon>Bacteria</taxon>
        <taxon>Pseudomonadati</taxon>
        <taxon>Pseudomonadota</taxon>
        <taxon>Gammaproteobacteria</taxon>
        <taxon>Pseudomonadales</taxon>
        <taxon>Pseudomonadaceae</taxon>
        <taxon>Pseudomonas</taxon>
    </lineage>
</organism>